<proteinExistence type="evidence at protein level"/>
<organism>
    <name type="scientific">Sesamum indicum</name>
    <name type="common">Oriental sesame</name>
    <name type="synonym">Sesamum orientale</name>
    <dbReference type="NCBI Taxonomy" id="4182"/>
    <lineage>
        <taxon>Eukaryota</taxon>
        <taxon>Viridiplantae</taxon>
        <taxon>Streptophyta</taxon>
        <taxon>Embryophyta</taxon>
        <taxon>Tracheophyta</taxon>
        <taxon>Spermatophyta</taxon>
        <taxon>Magnoliopsida</taxon>
        <taxon>eudicotyledons</taxon>
        <taxon>Gunneridae</taxon>
        <taxon>Pentapetalae</taxon>
        <taxon>asterids</taxon>
        <taxon>lamiids</taxon>
        <taxon>Lamiales</taxon>
        <taxon>Pedaliaceae</taxon>
        <taxon>Sesamum</taxon>
    </lineage>
</organism>
<dbReference type="EMBL" id="AF091842">
    <property type="protein sequence ID" value="AAD42944.1"/>
    <property type="molecule type" value="mRNA"/>
</dbReference>
<dbReference type="RefSeq" id="NP_001291336.1">
    <property type="nucleotide sequence ID" value="NM_001304407.1"/>
</dbReference>
<dbReference type="SMR" id="Q9XHP0"/>
<dbReference type="Allergome" id="2681">
    <property type="allergen name" value="Ses i 6"/>
</dbReference>
<dbReference type="Allergome" id="3476">
    <property type="allergen name" value="Ses i 6.0101"/>
</dbReference>
<dbReference type="EnsemblPlants" id="SIN_1009682.t">
    <property type="protein sequence ID" value="SIN_1009682.t"/>
    <property type="gene ID" value="SIN_1009682"/>
</dbReference>
<dbReference type="GeneID" id="105163414"/>
<dbReference type="Gramene" id="SIN_1009682.t">
    <property type="protein sequence ID" value="SIN_1009682.t"/>
    <property type="gene ID" value="SIN_1009682"/>
</dbReference>
<dbReference type="KEGG" id="sind:105163414"/>
<dbReference type="InParanoid" id="Q9XHP0"/>
<dbReference type="OrthoDB" id="1903982at2759"/>
<dbReference type="PhylomeDB" id="Q9XHP0"/>
<dbReference type="Proteomes" id="UP000504604">
    <property type="component" value="Linkage group LG6"/>
</dbReference>
<dbReference type="GO" id="GO:0042735">
    <property type="term" value="C:endosperm protein body"/>
    <property type="evidence" value="ECO:0000303"/>
    <property type="project" value="UniProtKB"/>
</dbReference>
<dbReference type="GO" id="GO:0045735">
    <property type="term" value="F:nutrient reservoir activity"/>
    <property type="evidence" value="ECO:0000303"/>
    <property type="project" value="UniProtKB"/>
</dbReference>
<dbReference type="GO" id="GO:0010431">
    <property type="term" value="P:seed maturation"/>
    <property type="evidence" value="ECO:0000270"/>
    <property type="project" value="UniProtKB"/>
</dbReference>
<dbReference type="CDD" id="cd02243">
    <property type="entry name" value="cupin_11S_legumin_C"/>
    <property type="match status" value="1"/>
</dbReference>
<dbReference type="CDD" id="cd02242">
    <property type="entry name" value="cupin_11S_legumin_N"/>
    <property type="match status" value="1"/>
</dbReference>
<dbReference type="FunFam" id="2.60.120.10:FF:000073">
    <property type="entry name" value="Glycinin G1"/>
    <property type="match status" value="1"/>
</dbReference>
<dbReference type="Gene3D" id="2.60.120.10">
    <property type="entry name" value="Jelly Rolls"/>
    <property type="match status" value="2"/>
</dbReference>
<dbReference type="InterPro" id="IPR022379">
    <property type="entry name" value="11S_seedstore_CS"/>
</dbReference>
<dbReference type="InterPro" id="IPR006044">
    <property type="entry name" value="11S_seedstore_pln"/>
</dbReference>
<dbReference type="InterPro" id="IPR006045">
    <property type="entry name" value="Cupin_1"/>
</dbReference>
<dbReference type="InterPro" id="IPR014710">
    <property type="entry name" value="RmlC-like_jellyroll"/>
</dbReference>
<dbReference type="InterPro" id="IPR011051">
    <property type="entry name" value="RmlC_Cupin_sf"/>
</dbReference>
<dbReference type="InterPro" id="IPR050253">
    <property type="entry name" value="Seed_Storage-Functional"/>
</dbReference>
<dbReference type="PANTHER" id="PTHR31189:SF54">
    <property type="entry name" value="11S GLOBULIN SEED STORAGE PROTEIN 2-LIKE"/>
    <property type="match status" value="1"/>
</dbReference>
<dbReference type="PANTHER" id="PTHR31189">
    <property type="entry name" value="OS03G0336100 PROTEIN-RELATED"/>
    <property type="match status" value="1"/>
</dbReference>
<dbReference type="Pfam" id="PF00190">
    <property type="entry name" value="Cupin_1"/>
    <property type="match status" value="2"/>
</dbReference>
<dbReference type="PRINTS" id="PR00439">
    <property type="entry name" value="11SGLOBULIN"/>
</dbReference>
<dbReference type="SMART" id="SM00835">
    <property type="entry name" value="Cupin_1"/>
    <property type="match status" value="2"/>
</dbReference>
<dbReference type="SUPFAM" id="SSF51182">
    <property type="entry name" value="RmlC-like cupins"/>
    <property type="match status" value="1"/>
</dbReference>
<dbReference type="PROSITE" id="PS00305">
    <property type="entry name" value="11S_SEED_STORAGE"/>
    <property type="match status" value="1"/>
</dbReference>
<sequence>MVAFKFLLALSLSLLVSAAIAQTREPRLTQGQQCRFQRISGAQPSLRIQSEGGTTELWDERQEQFQCAGIVAMRSTIRPNGLSLPNYHPSPRLVYIERGQGLISIMVPGCAETYQVHRSQRTMERTEASEQQDRGSVRDLHQKVHRLRQGDIVAIPSGAAHWCYNDGSEDLVAVSINDVNHLSNQLDQKFRAFYLAGGVPRSGEQEQQARQTFHNIFRAFDAELLSEAFNVPQETIRRMQSEEEERGLIVMARERMTFVRPDEEEGEQEHRGRQLDNGLEETFCTMKFRTNVESRREADIFSRQAGRVHVVDRNKLPILKYMDLSAEKGNLYSNALVSPDWSMTGHTIVYVTRGDAQVQVVDHNGQALMNDRVNQGEMFVVPQYYTSTARAGNNGFEWVAFKTTGSPMRSPLAGYTSVIRAMPLQVITNSYQISPNQAQALKMNRGSQSFLLSPGGRRS</sequence>
<accession>Q9XHP0</accession>
<comment type="function">
    <text evidence="13 14">Seed storage protein.</text>
</comment>
<comment type="subunit">
    <text evidence="2 6">Homohexamer (By similarity). Each subunit is composed of an acidic and a basic chain derived from a single precursor and linked by a disulfide bond (PubMed:10606554).</text>
</comment>
<comment type="tissue specificity">
    <text evidence="6 7 8">Expressed in seeds (at protein level) (PubMed:10606554, PubMed:17517107). Expressed in seeds (PubMed:17556061).</text>
</comment>
<comment type="developmental stage">
    <text evidence="6">Expressed during seed maturation. Expressed in the maturing seeds 24 days after flowering.</text>
</comment>
<comment type="allergen">
    <text evidence="7 8">Causes an allergic reaction in human. Binds to IgE of patients allergic to sesame seeds (PubMed:17517107, PubMed:17556061). Recombinant protein binds to IgE in 58% of the 19 patients tested (PubMed:17517107). Recombinant protein binds strongly to IgE in 54% of the 24 patients tested (PubMed:17556061). Recombinant protein is able to activate basophils previously passively sensitized with sesame-allergic sera in 7 out of 11 patients (PubMed:17517107).</text>
</comment>
<comment type="similarity">
    <text evidence="4">Belongs to the 11S seed storage protein (globulins) family.</text>
</comment>
<evidence type="ECO:0000250" key="1"/>
<evidence type="ECO:0000250" key="2">
    <source>
        <dbReference type="UniProtKB" id="A0A1L6K371"/>
    </source>
</evidence>
<evidence type="ECO:0000250" key="3">
    <source>
        <dbReference type="UniProtKB" id="P04405"/>
    </source>
</evidence>
<evidence type="ECO:0000255" key="4"/>
<evidence type="ECO:0000256" key="5">
    <source>
        <dbReference type="SAM" id="MobiDB-lite"/>
    </source>
</evidence>
<evidence type="ECO:0000269" key="6">
    <source>
    </source>
</evidence>
<evidence type="ECO:0000269" key="7">
    <source>
    </source>
</evidence>
<evidence type="ECO:0000269" key="8">
    <source>
    </source>
</evidence>
<evidence type="ECO:0000303" key="9">
    <source>
    </source>
</evidence>
<evidence type="ECO:0000303" key="10">
    <source>
    </source>
</evidence>
<evidence type="ECO:0000303" key="11">
    <source>
    </source>
</evidence>
<evidence type="ECO:0000305" key="12"/>
<evidence type="ECO:0000305" key="13">
    <source>
    </source>
</evidence>
<evidence type="ECO:0000305" key="14">
    <source>
    </source>
</evidence>
<evidence type="ECO:0000312" key="15">
    <source>
        <dbReference type="EMBL" id="AAD42944.1"/>
    </source>
</evidence>
<reference evidence="15" key="1">
    <citation type="journal article" date="1999" name="J. Agric. Food Chem.">
        <title>Molecular cloning of 11S globulin and 2S albumin, the two major seed storage proteins in sesame.</title>
        <authorList>
            <person name="Tai S.S.K."/>
            <person name="Wu L.S.H."/>
            <person name="Chen E.C.F."/>
            <person name="Tzen J.T.C."/>
        </authorList>
    </citation>
    <scope>NUCLEOTIDE SEQUENCE [MRNA]</scope>
    <scope>SUBUNIT</scope>
    <scope>TISSUE SPECIFICITY</scope>
    <scope>DEVELOPMENTAL STAGE</scope>
    <source>
        <strain evidence="9">cv. Tainan 1</strain>
        <tissue evidence="6">Seed</tissue>
    </source>
</reference>
<reference key="2">
    <citation type="journal article" date="2007" name="Clin. Exp. Allergy">
        <title>Ses i 6, the sesame 11S globulin, can activate basophils and shows cross-reactivity with walnut in vitro.</title>
        <authorList>
            <person name="Wallowitz M.L."/>
            <person name="Chen R.J."/>
            <person name="Tzen J.T."/>
            <person name="Teuber S.S."/>
        </authorList>
    </citation>
    <scope>TISSUE SPECIFICITY</scope>
    <scope>ALLERGEN</scope>
</reference>
<reference key="3">
    <citation type="journal article" date="2007" name="J. Allergy Clin. Immunol.">
        <title>Identification of 2 new sesame seed allergens: Ses i 6 and Ses i 7.</title>
        <authorList>
            <person name="Beyer K."/>
            <person name="Grishina G."/>
            <person name="Bardina L."/>
            <person name="Sampson H.A."/>
        </authorList>
    </citation>
    <scope>TISSUE SPECIFICITY</scope>
    <scope>ALLERGEN</scope>
</reference>
<keyword id="KW-0020">Allergen</keyword>
<keyword id="KW-1015">Disulfide bond</keyword>
<keyword id="KW-1185">Reference proteome</keyword>
<keyword id="KW-0708">Seed storage protein</keyword>
<keyword id="KW-0732">Signal</keyword>
<keyword id="KW-0758">Storage protein</keyword>
<name>11S2_SESIN</name>
<feature type="signal peptide" evidence="4">
    <location>
        <begin position="1"/>
        <end position="21"/>
    </location>
</feature>
<feature type="chain" id="PRO_0000043209" description="11S globulin seed storage protein 2 acidic chain" evidence="1">
    <location>
        <begin position="22"/>
        <end position="277"/>
    </location>
</feature>
<feature type="chain" id="PRO_0000043210" description="11S globulin seed storage protein 2 basic chain" evidence="1">
    <location>
        <begin position="278"/>
        <end position="459"/>
    </location>
</feature>
<feature type="domain" description="Cupin type-1 1" evidence="4">
    <location>
        <begin position="37"/>
        <end position="237"/>
    </location>
</feature>
<feature type="domain" description="Cupin type-1 2" evidence="4">
    <location>
        <begin position="290"/>
        <end position="439"/>
    </location>
</feature>
<feature type="region of interest" description="Disordered" evidence="5">
    <location>
        <begin position="118"/>
        <end position="139"/>
    </location>
</feature>
<feature type="compositionally biased region" description="Basic and acidic residues" evidence="5">
    <location>
        <begin position="121"/>
        <end position="139"/>
    </location>
</feature>
<feature type="disulfide bond" evidence="1">
    <location>
        <begin position="34"/>
        <end position="67"/>
    </location>
</feature>
<feature type="disulfide bond" description="Interchain (between acidic and basic chains)" evidence="3">
    <location>
        <begin position="110"/>
        <end position="284"/>
    </location>
</feature>
<protein>
    <recommendedName>
        <fullName>11S globulin seed storage protein 2</fullName>
    </recommendedName>
    <alternativeName>
        <fullName evidence="10">11S globulin Ses i 6</fullName>
    </alternativeName>
    <alternativeName>
        <fullName>11S globulin seed storage protein II</fullName>
    </alternativeName>
    <alternativeName>
        <fullName evidence="11">Allergen Ses i 6</fullName>
    </alternativeName>
    <alternativeName>
        <fullName>Alpha-globulin</fullName>
    </alternativeName>
    <allergenName evidence="12">Ses i 6.0101</allergenName>
    <component>
        <recommendedName>
            <fullName>11S globulin seed storage protein 2 acidic chain</fullName>
        </recommendedName>
        <alternativeName>
            <fullName>11S globulin seed storage protein II acidic chain</fullName>
        </alternativeName>
    </component>
    <component>
        <recommendedName>
            <fullName>11S globulin seed storage protein 2 basic chain</fullName>
        </recommendedName>
        <alternativeName>
            <fullName>11S globulin seed storage protein II basic chain</fullName>
        </alternativeName>
    </component>
</protein>